<organism>
    <name type="scientific">Rhodococcus jostii (strain RHA1)</name>
    <dbReference type="NCBI Taxonomy" id="101510"/>
    <lineage>
        <taxon>Bacteria</taxon>
        <taxon>Bacillati</taxon>
        <taxon>Actinomycetota</taxon>
        <taxon>Actinomycetes</taxon>
        <taxon>Mycobacteriales</taxon>
        <taxon>Nocardiaceae</taxon>
        <taxon>Rhodococcus</taxon>
    </lineage>
</organism>
<dbReference type="EMBL" id="CP000431">
    <property type="protein sequence ID" value="ABG97938.1"/>
    <property type="molecule type" value="Genomic_DNA"/>
</dbReference>
<dbReference type="RefSeq" id="WP_005253863.1">
    <property type="nucleotide sequence ID" value="NC_008268.1"/>
</dbReference>
<dbReference type="SMR" id="Q0S3E8"/>
<dbReference type="KEGG" id="rha:RHA1_ro06161"/>
<dbReference type="eggNOG" id="COG0522">
    <property type="taxonomic scope" value="Bacteria"/>
</dbReference>
<dbReference type="HOGENOM" id="CLU_092403_0_2_11"/>
<dbReference type="OrthoDB" id="9803672at2"/>
<dbReference type="Proteomes" id="UP000008710">
    <property type="component" value="Chromosome"/>
</dbReference>
<dbReference type="GO" id="GO:0015935">
    <property type="term" value="C:small ribosomal subunit"/>
    <property type="evidence" value="ECO:0007669"/>
    <property type="project" value="InterPro"/>
</dbReference>
<dbReference type="GO" id="GO:0019843">
    <property type="term" value="F:rRNA binding"/>
    <property type="evidence" value="ECO:0007669"/>
    <property type="project" value="UniProtKB-UniRule"/>
</dbReference>
<dbReference type="GO" id="GO:0003735">
    <property type="term" value="F:structural constituent of ribosome"/>
    <property type="evidence" value="ECO:0007669"/>
    <property type="project" value="InterPro"/>
</dbReference>
<dbReference type="GO" id="GO:0042274">
    <property type="term" value="P:ribosomal small subunit biogenesis"/>
    <property type="evidence" value="ECO:0007669"/>
    <property type="project" value="TreeGrafter"/>
</dbReference>
<dbReference type="GO" id="GO:0006412">
    <property type="term" value="P:translation"/>
    <property type="evidence" value="ECO:0007669"/>
    <property type="project" value="UniProtKB-UniRule"/>
</dbReference>
<dbReference type="CDD" id="cd00165">
    <property type="entry name" value="S4"/>
    <property type="match status" value="1"/>
</dbReference>
<dbReference type="FunFam" id="3.10.290.10:FF:000001">
    <property type="entry name" value="30S ribosomal protein S4"/>
    <property type="match status" value="1"/>
</dbReference>
<dbReference type="Gene3D" id="1.10.1050.10">
    <property type="entry name" value="Ribosomal Protein S4 Delta 41, Chain A, domain 1"/>
    <property type="match status" value="1"/>
</dbReference>
<dbReference type="Gene3D" id="3.10.290.10">
    <property type="entry name" value="RNA-binding S4 domain"/>
    <property type="match status" value="1"/>
</dbReference>
<dbReference type="HAMAP" id="MF_01306_B">
    <property type="entry name" value="Ribosomal_uS4_B"/>
    <property type="match status" value="1"/>
</dbReference>
<dbReference type="InterPro" id="IPR022801">
    <property type="entry name" value="Ribosomal_uS4"/>
</dbReference>
<dbReference type="InterPro" id="IPR005709">
    <property type="entry name" value="Ribosomal_uS4_bac-type"/>
</dbReference>
<dbReference type="InterPro" id="IPR018079">
    <property type="entry name" value="Ribosomal_uS4_CS"/>
</dbReference>
<dbReference type="InterPro" id="IPR001912">
    <property type="entry name" value="Ribosomal_uS4_N"/>
</dbReference>
<dbReference type="InterPro" id="IPR002942">
    <property type="entry name" value="S4_RNA-bd"/>
</dbReference>
<dbReference type="InterPro" id="IPR036986">
    <property type="entry name" value="S4_RNA-bd_sf"/>
</dbReference>
<dbReference type="NCBIfam" id="NF003717">
    <property type="entry name" value="PRK05327.1"/>
    <property type="match status" value="1"/>
</dbReference>
<dbReference type="NCBIfam" id="TIGR01017">
    <property type="entry name" value="rpsD_bact"/>
    <property type="match status" value="1"/>
</dbReference>
<dbReference type="PANTHER" id="PTHR11831">
    <property type="entry name" value="30S 40S RIBOSOMAL PROTEIN"/>
    <property type="match status" value="1"/>
</dbReference>
<dbReference type="PANTHER" id="PTHR11831:SF4">
    <property type="entry name" value="SMALL RIBOSOMAL SUBUNIT PROTEIN US4M"/>
    <property type="match status" value="1"/>
</dbReference>
<dbReference type="Pfam" id="PF00163">
    <property type="entry name" value="Ribosomal_S4"/>
    <property type="match status" value="1"/>
</dbReference>
<dbReference type="Pfam" id="PF01479">
    <property type="entry name" value="S4"/>
    <property type="match status" value="1"/>
</dbReference>
<dbReference type="SMART" id="SM01390">
    <property type="entry name" value="Ribosomal_S4"/>
    <property type="match status" value="1"/>
</dbReference>
<dbReference type="SMART" id="SM00363">
    <property type="entry name" value="S4"/>
    <property type="match status" value="1"/>
</dbReference>
<dbReference type="SUPFAM" id="SSF55174">
    <property type="entry name" value="Alpha-L RNA-binding motif"/>
    <property type="match status" value="1"/>
</dbReference>
<dbReference type="PROSITE" id="PS00632">
    <property type="entry name" value="RIBOSOMAL_S4"/>
    <property type="match status" value="1"/>
</dbReference>
<dbReference type="PROSITE" id="PS50889">
    <property type="entry name" value="S4"/>
    <property type="match status" value="1"/>
</dbReference>
<gene>
    <name evidence="1" type="primary">rpsD</name>
    <name type="ordered locus">RHA1_ro06161</name>
</gene>
<reference key="1">
    <citation type="journal article" date="2006" name="Proc. Natl. Acad. Sci. U.S.A.">
        <title>The complete genome of Rhodococcus sp. RHA1 provides insights into a catabolic powerhouse.</title>
        <authorList>
            <person name="McLeod M.P."/>
            <person name="Warren R.L."/>
            <person name="Hsiao W.W.L."/>
            <person name="Araki N."/>
            <person name="Myhre M."/>
            <person name="Fernandes C."/>
            <person name="Miyazawa D."/>
            <person name="Wong W."/>
            <person name="Lillquist A.L."/>
            <person name="Wang D."/>
            <person name="Dosanjh M."/>
            <person name="Hara H."/>
            <person name="Petrescu A."/>
            <person name="Morin R.D."/>
            <person name="Yang G."/>
            <person name="Stott J.M."/>
            <person name="Schein J.E."/>
            <person name="Shin H."/>
            <person name="Smailus D."/>
            <person name="Siddiqui A.S."/>
            <person name="Marra M.A."/>
            <person name="Jones S.J.M."/>
            <person name="Holt R."/>
            <person name="Brinkman F.S.L."/>
            <person name="Miyauchi K."/>
            <person name="Fukuda M."/>
            <person name="Davies J.E."/>
            <person name="Mohn W.W."/>
            <person name="Eltis L.D."/>
        </authorList>
    </citation>
    <scope>NUCLEOTIDE SEQUENCE [LARGE SCALE GENOMIC DNA]</scope>
    <source>
        <strain>RHA1</strain>
    </source>
</reference>
<accession>Q0S3E8</accession>
<feature type="chain" id="PRO_0000293351" description="Small ribosomal subunit protein uS4">
    <location>
        <begin position="1"/>
        <end position="201"/>
    </location>
</feature>
<feature type="domain" description="S4 RNA-binding" evidence="1">
    <location>
        <begin position="91"/>
        <end position="155"/>
    </location>
</feature>
<evidence type="ECO:0000255" key="1">
    <source>
        <dbReference type="HAMAP-Rule" id="MF_01306"/>
    </source>
</evidence>
<evidence type="ECO:0000305" key="2"/>
<name>RS4_RHOJR</name>
<proteinExistence type="inferred from homology"/>
<sequence length="201" mass="23452">MARYTGPITRKSRRLRVDLVGGDQAFERRPYPPGQHGRARIKESEYLLQLQEKQKARFTYGVMEKQFRLYYKEANNRPGKTGENLLRILESRLDNVVYRAGLARTRRQARQLVTHGHLLVNNKKVDIPSYRVSQYDIIDVKEKSLSTLPFQVARETQGDRPIPGWLQVVGGRLRVLVHQLPERAQIDVPLQEQLIVEYYSK</sequence>
<comment type="function">
    <text evidence="1">One of the primary rRNA binding proteins, it binds directly to 16S rRNA where it nucleates assembly of the body of the 30S subunit.</text>
</comment>
<comment type="function">
    <text evidence="1">With S5 and S12 plays an important role in translational accuracy.</text>
</comment>
<comment type="subunit">
    <text evidence="1">Part of the 30S ribosomal subunit. Contacts protein S5. The interaction surface between S4 and S5 is involved in control of translational fidelity.</text>
</comment>
<comment type="similarity">
    <text evidence="1">Belongs to the universal ribosomal protein uS4 family.</text>
</comment>
<keyword id="KW-0687">Ribonucleoprotein</keyword>
<keyword id="KW-0689">Ribosomal protein</keyword>
<keyword id="KW-0694">RNA-binding</keyword>
<keyword id="KW-0699">rRNA-binding</keyword>
<protein>
    <recommendedName>
        <fullName evidence="1">Small ribosomal subunit protein uS4</fullName>
    </recommendedName>
    <alternativeName>
        <fullName evidence="2">30S ribosomal protein S4</fullName>
    </alternativeName>
</protein>